<sequence length="117" mass="13989">MIDKIKSNARDLRRNLTLQERKLWRYLRSRRFSDFKFRRQHPVGSYILDFACCSARVVVELDGGQHDLAVAYDSRRTSWLESQGWTVLRFWNNEIDCNEETVLENILQELNRRSPSP</sequence>
<comment type="similarity">
    <text evidence="1">To H.influenzae HI_1162 and to HI_0925.</text>
</comment>
<reference key="1">
    <citation type="journal article" date="1996" name="DNA Res.">
        <title>A 570-kb DNA sequence of the Escherichia coli K-12 genome corresponding to the 28.0-40.1 min region on the linkage map.</title>
        <authorList>
            <person name="Aiba H."/>
            <person name="Baba T."/>
            <person name="Fujita K."/>
            <person name="Hayashi K."/>
            <person name="Inada T."/>
            <person name="Isono K."/>
            <person name="Itoh T."/>
            <person name="Kasai H."/>
            <person name="Kashimoto K."/>
            <person name="Kimura S."/>
            <person name="Kitakawa M."/>
            <person name="Kitagawa M."/>
            <person name="Makino K."/>
            <person name="Miki T."/>
            <person name="Mizobuchi K."/>
            <person name="Mori H."/>
            <person name="Mori T."/>
            <person name="Motomura K."/>
            <person name="Nakade S."/>
            <person name="Nakamura Y."/>
            <person name="Nashimoto H."/>
            <person name="Nishio Y."/>
            <person name="Oshima T."/>
            <person name="Saito N."/>
            <person name="Sampei G."/>
            <person name="Seki Y."/>
            <person name="Sivasundaram S."/>
            <person name="Tagami H."/>
            <person name="Takeda J."/>
            <person name="Takemoto K."/>
            <person name="Takeuchi Y."/>
            <person name="Wada C."/>
            <person name="Yamamoto Y."/>
            <person name="Horiuchi T."/>
        </authorList>
    </citation>
    <scope>NUCLEOTIDE SEQUENCE [LARGE SCALE GENOMIC DNA]</scope>
    <source>
        <strain>K12 / W3110 / ATCC 27325 / DSM 5911</strain>
    </source>
</reference>
<reference key="2">
    <citation type="journal article" date="1997" name="Science">
        <title>The complete genome sequence of Escherichia coli K-12.</title>
        <authorList>
            <person name="Blattner F.R."/>
            <person name="Plunkett G. III"/>
            <person name="Bloch C.A."/>
            <person name="Perna N.T."/>
            <person name="Burland V."/>
            <person name="Riley M."/>
            <person name="Collado-Vides J."/>
            <person name="Glasner J.D."/>
            <person name="Rode C.K."/>
            <person name="Mayhew G.F."/>
            <person name="Gregor J."/>
            <person name="Davis N.W."/>
            <person name="Kirkpatrick H.A."/>
            <person name="Goeden M.A."/>
            <person name="Rose D.J."/>
            <person name="Mau B."/>
            <person name="Shao Y."/>
        </authorList>
    </citation>
    <scope>NUCLEOTIDE SEQUENCE [LARGE SCALE GENOMIC DNA]</scope>
    <source>
        <strain>K12 / MG1655 / ATCC 47076</strain>
    </source>
</reference>
<reference key="3">
    <citation type="journal article" date="2006" name="Mol. Syst. Biol.">
        <title>Highly accurate genome sequences of Escherichia coli K-12 strains MG1655 and W3110.</title>
        <authorList>
            <person name="Hayashi K."/>
            <person name="Morooka N."/>
            <person name="Yamamoto Y."/>
            <person name="Fujita K."/>
            <person name="Isono K."/>
            <person name="Choi S."/>
            <person name="Ohtsubo E."/>
            <person name="Baba T."/>
            <person name="Wanner B.L."/>
            <person name="Mori H."/>
            <person name="Horiuchi T."/>
        </authorList>
    </citation>
    <scope>NUCLEOTIDE SEQUENCE [LARGE SCALE GENOMIC DNA]</scope>
    <source>
        <strain>K12 / W3110 / ATCC 27325 / DSM 5911</strain>
    </source>
</reference>
<reference key="4">
    <citation type="submission" date="1994-03" db="EMBL/GenBank/DDBJ databases">
        <authorList>
            <person name="Bergler H."/>
            <person name="Ebeling A."/>
            <person name="Fuchsbichler S."/>
            <person name="Hogenauer G."/>
            <person name="Turnowsky F."/>
        </authorList>
    </citation>
    <scope>NUCLEOTIDE SEQUENCE [GENOMIC DNA] OF 1-108</scope>
</reference>
<reference key="5">
    <citation type="journal article" date="2001" name="Microbiology">
        <title>Identification of the ABC protein SapD as the subunit that confers ATP dependence to the K+-uptake systems Trk(H) and Trk(G) from Escherichia coli K-12.</title>
        <authorList>
            <person name="Harms C."/>
            <person name="Domoto Y."/>
            <person name="Celik C."/>
            <person name="Rahe E."/>
            <person name="Stumpe S."/>
            <person name="Schmid R."/>
            <person name="Nakamura T."/>
            <person name="Bakker E.P."/>
        </authorList>
    </citation>
    <scope>NUCLEOTIDE SEQUENCE [GENOMIC DNA] OF 1-108</scope>
    <source>
        <strain>K12</strain>
    </source>
</reference>
<reference key="6">
    <citation type="journal article" date="1994" name="Plant Mol. Biol.">
        <title>The use of a hybrid genetic system to study the functional relationship between prokaryotic and plant multi-enzyme fatty acid synthetase complexes.</title>
        <authorList>
            <person name="Kater M.M."/>
            <person name="Koningstein G.M."/>
            <person name="Nijkamp H.J.J."/>
            <person name="Stuitje A.R."/>
        </authorList>
    </citation>
    <scope>NUCLEOTIDE SEQUENCE [GENOMIC DNA] OF 75-117</scope>
    <source>
        <strain>K12 / W3110 / ATCC 27325 / DSM 5911</strain>
    </source>
</reference>
<reference key="7">
    <citation type="journal article" date="1992" name="J. Gen. Microbiol.">
        <title>Sequences of the envM gene and of two mutated alleles in Escherichia coli.</title>
        <authorList>
            <person name="Bergler H."/>
            <person name="Hoegenauer G."/>
            <person name="Turnowsky F."/>
        </authorList>
    </citation>
    <scope>NUCLEOTIDE SEQUENCE [GENOMIC DNA] OF 107-117</scope>
</reference>
<reference key="8">
    <citation type="unpublished observations" date="1995-05">
        <authorList>
            <person name="Rudd K.E."/>
        </authorList>
    </citation>
    <scope>IDENTIFICATION</scope>
</reference>
<accession>P45736</accession>
<accession>P71233</accession>
<protein>
    <recommendedName>
        <fullName>Uncharacterized protein YcjD</fullName>
    </recommendedName>
</protein>
<name>YCJD_ECOLI</name>
<gene>
    <name type="primary">ycjD</name>
    <name type="ordered locus">b1289</name>
    <name type="ordered locus">JW1282</name>
</gene>
<feature type="chain" id="PRO_0000168891" description="Uncharacterized protein YcjD">
    <location>
        <begin position="1"/>
        <end position="117"/>
    </location>
</feature>
<organism>
    <name type="scientific">Escherichia coli (strain K12)</name>
    <dbReference type="NCBI Taxonomy" id="83333"/>
    <lineage>
        <taxon>Bacteria</taxon>
        <taxon>Pseudomonadati</taxon>
        <taxon>Pseudomonadota</taxon>
        <taxon>Gammaproteobacteria</taxon>
        <taxon>Enterobacterales</taxon>
        <taxon>Enterobacteriaceae</taxon>
        <taxon>Escherichia</taxon>
    </lineage>
</organism>
<keyword id="KW-1185">Reference proteome</keyword>
<evidence type="ECO:0000305" key="1"/>
<proteinExistence type="predicted"/>
<dbReference type="EMBL" id="U00096">
    <property type="protein sequence ID" value="AAC74371.1"/>
    <property type="molecule type" value="Genomic_DNA"/>
</dbReference>
<dbReference type="EMBL" id="AP009048">
    <property type="protein sequence ID" value="BAA14842.1"/>
    <property type="molecule type" value="Genomic_DNA"/>
</dbReference>
<dbReference type="EMBL" id="U08190">
    <property type="status" value="NOT_ANNOTATED_CDS"/>
    <property type="molecule type" value="Unassigned_DNA"/>
</dbReference>
<dbReference type="EMBL" id="X97282">
    <property type="protein sequence ID" value="CAA65942.1"/>
    <property type="molecule type" value="Genomic_DNA"/>
</dbReference>
<dbReference type="EMBL" id="X78733">
    <property type="status" value="NOT_ANNOTATED_CDS"/>
    <property type="molecule type" value="Genomic_DNA"/>
</dbReference>
<dbReference type="EMBL" id="M97219">
    <property type="status" value="NOT_ANNOTATED_CDS"/>
    <property type="molecule type" value="Unassigned_DNA"/>
</dbReference>
<dbReference type="PIR" id="D64877">
    <property type="entry name" value="D64877"/>
</dbReference>
<dbReference type="RefSeq" id="NP_415805.1">
    <property type="nucleotide sequence ID" value="NC_000913.3"/>
</dbReference>
<dbReference type="RefSeq" id="WP_000565727.1">
    <property type="nucleotide sequence ID" value="NZ_SSZK01000012.1"/>
</dbReference>
<dbReference type="SMR" id="P45736"/>
<dbReference type="BioGRID" id="4260131">
    <property type="interactions" value="14"/>
</dbReference>
<dbReference type="FunCoup" id="P45736">
    <property type="interactions" value="170"/>
</dbReference>
<dbReference type="STRING" id="511145.b1289"/>
<dbReference type="PaxDb" id="511145-b1289"/>
<dbReference type="EnsemblBacteria" id="AAC74371">
    <property type="protein sequence ID" value="AAC74371"/>
    <property type="gene ID" value="b1289"/>
</dbReference>
<dbReference type="GeneID" id="945871"/>
<dbReference type="KEGG" id="ecj:JW1282"/>
<dbReference type="KEGG" id="eco:b1289"/>
<dbReference type="PATRIC" id="fig|511145.12.peg.1344"/>
<dbReference type="EchoBASE" id="EB2523"/>
<dbReference type="eggNOG" id="COG2852">
    <property type="taxonomic scope" value="Bacteria"/>
</dbReference>
<dbReference type="HOGENOM" id="CLU_107928_2_0_6"/>
<dbReference type="InParanoid" id="P45736"/>
<dbReference type="OMA" id="DFYCHAA"/>
<dbReference type="OrthoDB" id="9798754at2"/>
<dbReference type="PhylomeDB" id="P45736"/>
<dbReference type="BioCyc" id="EcoCyc:G6641-MONOMER"/>
<dbReference type="PRO" id="PR:P45736"/>
<dbReference type="Proteomes" id="UP000000625">
    <property type="component" value="Chromosome"/>
</dbReference>
<dbReference type="CDD" id="cd01038">
    <property type="entry name" value="Endonuclease_DUF559"/>
    <property type="match status" value="1"/>
</dbReference>
<dbReference type="Gene3D" id="3.40.960.10">
    <property type="entry name" value="VSR Endonuclease"/>
    <property type="match status" value="1"/>
</dbReference>
<dbReference type="InterPro" id="IPR007569">
    <property type="entry name" value="DUF559"/>
</dbReference>
<dbReference type="InterPro" id="IPR047216">
    <property type="entry name" value="Endonuclease_DUF559_bact"/>
</dbReference>
<dbReference type="InterPro" id="IPR011335">
    <property type="entry name" value="Restrct_endonuc-II-like"/>
</dbReference>
<dbReference type="NCBIfam" id="NF007294">
    <property type="entry name" value="PRK09767.1"/>
    <property type="match status" value="1"/>
</dbReference>
<dbReference type="PANTHER" id="PTHR38590">
    <property type="entry name" value="BLL0828 PROTEIN"/>
    <property type="match status" value="1"/>
</dbReference>
<dbReference type="PANTHER" id="PTHR38590:SF1">
    <property type="entry name" value="BLL0828 PROTEIN"/>
    <property type="match status" value="1"/>
</dbReference>
<dbReference type="Pfam" id="PF04480">
    <property type="entry name" value="DUF559"/>
    <property type="match status" value="1"/>
</dbReference>
<dbReference type="SUPFAM" id="SSF52980">
    <property type="entry name" value="Restriction endonuclease-like"/>
    <property type="match status" value="1"/>
</dbReference>